<accession>A9JPE4</accession>
<keyword id="KW-0413">Isomerase</keyword>
<keyword id="KW-0472">Membrane</keyword>
<keyword id="KW-0812">Transmembrane</keyword>
<keyword id="KW-1133">Transmembrane helix</keyword>
<sequence>MDSVLRYVFLLLAMTSFYMMYISLFNNGFFNLLSHQLATRALPGESDIALLSEYTGLKAFDGILESIVIFFWPISQGHHVGLSLTGLSFSGGMVGIWMIVVVHICRIRSFTRGMVITLIVGIAQQAVGPGIVIPCYFALTSRARPPNKNLHLTGTYSTSNHGLVVSMIMSYIFPLVIMSLPAPAMISPHSKQQVIAAWQGWPVYFVIIMTTHHLFINRGHRKEASARRQVLSVYHFGFACSCLCHMAWLSAFVASKIQSLSQSSNFWYLCPYGVAFPLLNQPAQRLGALEAGLFTFLQWDYCVAAAATMVWSTDRYIQECHRAELEIDKFRLILRLLGWILIDGPSATAVRLIWESEGPSYLQNPN</sequence>
<reference key="1">
    <citation type="journal article" date="2009" name="Appl. Environ. Microbiol.">
        <title>Identification of two aflatrem biosynthesis gene loci in Aspergillus flavus and metabolic engineering of Penicillium paxilli to elucidate their function.</title>
        <authorList>
            <person name="Nicholson M.J."/>
            <person name="Koulman A."/>
            <person name="Monahan B.J."/>
            <person name="Pritchard B.L."/>
            <person name="Payne G.A."/>
            <person name="Scott B."/>
        </authorList>
    </citation>
    <scope>NUCLEOTIDE SEQUENCE [GENOMIC DNA]</scope>
    <scope>IDENTIFICATION</scope>
    <scope>INDUCTION</scope>
    <scope>FUNCTION</scope>
    <source>
        <strain>NRRL 6541</strain>
    </source>
</reference>
<reference key="2">
    <citation type="journal article" date="1985" name="Environ. Health Perspect.">
        <title>Aflatrem: a tremorgenic mycotoxin with acute neurotoxic effects.</title>
        <authorList>
            <person name="Valdes J.J."/>
            <person name="Cameron J.E."/>
            <person name="Cole R.J."/>
        </authorList>
    </citation>
    <scope>FUNCTION</scope>
</reference>
<comment type="function">
    <text evidence="3 4">Aflatrem synthesis protein A; part of the ATM2 gene cluster that mediates the biosynthesis of aflatrem, a tremorgenic mycotoxin with acute neurotoxic effects (PubMed:19801473, PubMed:2867895). Synthesis of geranylgeranyl diphosphate (GGPP) by AtmG (a GGPP synthase) precedes condensation of GGPP with indole 3-glycerol phosphate, followed by epoxidation and cyclization by AtmM (a FAD-dependent monooxygenase) and AtmC (a prenyltransferase) to produce paspaline (PubMed:19801473). AtmB is also essential for paspaline production, but its exact role has not been identified yet (PubMed:19801473). AtmP, a cytochrome P450 monooxygenase, subsequently converts paspaline to 13-desoxypaxilline via PC-M6 by removal of the C-30 methyl group and oxidation at C-10 (PubMed:19801473). AtmQ, a cytochrome P450 monooxygenase, then catalyzes the oxidation of 13-desoxypaxilline, first at C-7 to produce paspalicine and then at C-13 to form paspalinine (PubMed:19801473). Finally, AtmD prenylates paspalinine to form aflatrem (PubMed:19801473). The role of atmA in the aflatrem biosynthesis is still unknown (PubMed:19801473).</text>
</comment>
<comment type="subcellular location">
    <subcellularLocation>
        <location evidence="2">Membrane</location>
        <topology evidence="2">Multi-pass membrane protein</topology>
    </subcellularLocation>
</comment>
<comment type="induction">
    <text evidence="3">The onset of expression occurs at 48-hour-old stationary cultures and the steady-state levels correlates with the onset of aflatrem biosynthesis at 108 hours (PubMed:19801473).</text>
</comment>
<comment type="similarity">
    <text evidence="6">Belongs to the membrane-bound ascI terpene cyclase family.</text>
</comment>
<protein>
    <recommendedName>
        <fullName evidence="1">Terpene cyclase atmA</fullName>
        <ecNumber evidence="1">5.4.99.-</ecNumber>
    </recommendedName>
    <alternativeName>
        <fullName evidence="5">Aflatrem synthesis protein A</fullName>
    </alternativeName>
</protein>
<evidence type="ECO:0000250" key="1">
    <source>
        <dbReference type="UniProtKB" id="A0A455R4Z0"/>
    </source>
</evidence>
<evidence type="ECO:0000255" key="2"/>
<evidence type="ECO:0000269" key="3">
    <source>
    </source>
</evidence>
<evidence type="ECO:0000269" key="4">
    <source>
    </source>
</evidence>
<evidence type="ECO:0000303" key="5">
    <source>
    </source>
</evidence>
<evidence type="ECO:0000305" key="6"/>
<proteinExistence type="evidence at transcript level"/>
<organism>
    <name type="scientific">Aspergillus flavus</name>
    <dbReference type="NCBI Taxonomy" id="5059"/>
    <lineage>
        <taxon>Eukaryota</taxon>
        <taxon>Fungi</taxon>
        <taxon>Dikarya</taxon>
        <taxon>Ascomycota</taxon>
        <taxon>Pezizomycotina</taxon>
        <taxon>Eurotiomycetes</taxon>
        <taxon>Eurotiomycetidae</taxon>
        <taxon>Eurotiales</taxon>
        <taxon>Aspergillaceae</taxon>
        <taxon>Aspergillus</taxon>
        <taxon>Aspergillus subgen. Circumdati</taxon>
    </lineage>
</organism>
<dbReference type="EC" id="5.4.99.-" evidence="1"/>
<dbReference type="EMBL" id="AM921700">
    <property type="protein sequence ID" value="CAP53940.1"/>
    <property type="molecule type" value="Genomic_DNA"/>
</dbReference>
<dbReference type="VEuPathDB" id="FungiDB:AFLA_008141"/>
<dbReference type="VEuPathDB" id="FungiDB:F9C07_1872228"/>
<dbReference type="GO" id="GO:0016020">
    <property type="term" value="C:membrane"/>
    <property type="evidence" value="ECO:0007669"/>
    <property type="project" value="UniProtKB-SubCell"/>
</dbReference>
<dbReference type="GO" id="GO:0016853">
    <property type="term" value="F:isomerase activity"/>
    <property type="evidence" value="ECO:0007669"/>
    <property type="project" value="UniProtKB-KW"/>
</dbReference>
<name>ATMA_ASPFL</name>
<feature type="chain" id="PRO_0000436120" description="Terpene cyclase atmA">
    <location>
        <begin position="1"/>
        <end position="366"/>
    </location>
</feature>
<feature type="transmembrane region" description="Helical" evidence="2">
    <location>
        <begin position="9"/>
        <end position="29"/>
    </location>
</feature>
<feature type="transmembrane region" description="Helical" evidence="2">
    <location>
        <begin position="84"/>
        <end position="104"/>
    </location>
</feature>
<feature type="transmembrane region" description="Helical" evidence="2">
    <location>
        <begin position="113"/>
        <end position="133"/>
    </location>
</feature>
<feature type="transmembrane region" description="Helical" evidence="2">
    <location>
        <begin position="162"/>
        <end position="182"/>
    </location>
</feature>
<feature type="transmembrane region" description="Helical" evidence="2">
    <location>
        <begin position="195"/>
        <end position="215"/>
    </location>
</feature>
<feature type="transmembrane region" description="Helical" evidence="2">
    <location>
        <begin position="233"/>
        <end position="253"/>
    </location>
</feature>
<feature type="transmembrane region" description="Helical" evidence="2">
    <location>
        <begin position="291"/>
        <end position="311"/>
    </location>
</feature>
<feature type="transmembrane region" description="Helical" evidence="2">
    <location>
        <begin position="333"/>
        <end position="353"/>
    </location>
</feature>
<gene>
    <name evidence="5" type="primary">atmA</name>
</gene>